<accession>Q9RDX2</accession>
<gene>
    <name type="primary">hisF</name>
</gene>
<sequence length="212" mass="23019">MSNVRLIARLDIKGPNLIKGVHLEGLRVVGNPNEYAMAYYAQGADELIYMDTVASLYGRNNLSEIVKTTAENVFIPITVGGGIRSVDDAEQLLRCGADKVAINTAATKNPTLISDIARRFGSQCVVLSIEAKRTVNGRWEVMTDNGREHTGMDVVDWARNGEKFGAGEILLTSIDQEGTRKGFDLELVKQVSSMVSIPVIASGGMGKLEEFN</sequence>
<organism>
    <name type="scientific">Legionella pneumophila</name>
    <dbReference type="NCBI Taxonomy" id="446"/>
    <lineage>
        <taxon>Bacteria</taxon>
        <taxon>Pseudomonadati</taxon>
        <taxon>Pseudomonadota</taxon>
        <taxon>Gammaproteobacteria</taxon>
        <taxon>Legionellales</taxon>
        <taxon>Legionellaceae</taxon>
        <taxon>Legionella</taxon>
    </lineage>
</organism>
<reference key="1">
    <citation type="journal article" date="2000" name="Int. J. Med. Microbiol.">
        <title>Cloning and functional characterization of a 30 kb gene locus required for lipopolysaccharide biosynthesis in Legionella pneumophila.</title>
        <authorList>
            <person name="Lueneberg E."/>
            <person name="Zetzmann N."/>
            <person name="Hartmann M."/>
            <person name="Knirel Y.A."/>
            <person name="Kooistra O."/>
            <person name="Zaehringer U."/>
            <person name="Helbig J."/>
            <person name="Frosch M."/>
        </authorList>
    </citation>
    <scope>NUCLEOTIDE SEQUENCE [GENOMIC DNA]</scope>
    <source>
        <strain>ATCC 43109 / NCTC 12008 / RC1 / Olda / Serogroup 1</strain>
    </source>
</reference>
<dbReference type="EC" id="4.3.2.10"/>
<dbReference type="EMBL" id="AJ007311">
    <property type="protein sequence ID" value="CAB65215.1"/>
    <property type="molecule type" value="Genomic_DNA"/>
</dbReference>
<dbReference type="SMR" id="Q9RDX2"/>
<dbReference type="STRING" id="91892.BIZ52_04065"/>
<dbReference type="eggNOG" id="COG0107">
    <property type="taxonomic scope" value="Bacteria"/>
</dbReference>
<dbReference type="UniPathway" id="UPA00031">
    <property type="reaction ID" value="UER00010"/>
</dbReference>
<dbReference type="GO" id="GO:0005737">
    <property type="term" value="C:cytoplasm"/>
    <property type="evidence" value="ECO:0007669"/>
    <property type="project" value="UniProtKB-SubCell"/>
</dbReference>
<dbReference type="GO" id="GO:0000107">
    <property type="term" value="F:imidazoleglycerol-phosphate synthase activity"/>
    <property type="evidence" value="ECO:0007669"/>
    <property type="project" value="InterPro"/>
</dbReference>
<dbReference type="GO" id="GO:0016829">
    <property type="term" value="F:lyase activity"/>
    <property type="evidence" value="ECO:0007669"/>
    <property type="project" value="UniProtKB-KW"/>
</dbReference>
<dbReference type="GO" id="GO:0000105">
    <property type="term" value="P:L-histidine biosynthetic process"/>
    <property type="evidence" value="ECO:0007669"/>
    <property type="project" value="UniProtKB-UniPathway"/>
</dbReference>
<dbReference type="CDD" id="cd04731">
    <property type="entry name" value="HisF"/>
    <property type="match status" value="1"/>
</dbReference>
<dbReference type="Gene3D" id="3.20.20.70">
    <property type="entry name" value="Aldolase class I"/>
    <property type="match status" value="1"/>
</dbReference>
<dbReference type="InterPro" id="IPR013785">
    <property type="entry name" value="Aldolase_TIM"/>
</dbReference>
<dbReference type="InterPro" id="IPR006062">
    <property type="entry name" value="His_biosynth"/>
</dbReference>
<dbReference type="InterPro" id="IPR004651">
    <property type="entry name" value="HisF"/>
</dbReference>
<dbReference type="InterPro" id="IPR050064">
    <property type="entry name" value="IGPS_HisA/HisF"/>
</dbReference>
<dbReference type="InterPro" id="IPR011060">
    <property type="entry name" value="RibuloseP-bd_barrel"/>
</dbReference>
<dbReference type="PANTHER" id="PTHR21235:SF2">
    <property type="entry name" value="IMIDAZOLE GLYCEROL PHOSPHATE SYNTHASE HISHF"/>
    <property type="match status" value="1"/>
</dbReference>
<dbReference type="PANTHER" id="PTHR21235">
    <property type="entry name" value="IMIDAZOLE GLYCEROL PHOSPHATE SYNTHASE SUBUNIT HISF/H IGP SYNTHASE SUBUNIT HISF/H"/>
    <property type="match status" value="1"/>
</dbReference>
<dbReference type="Pfam" id="PF00977">
    <property type="entry name" value="His_biosynth"/>
    <property type="match status" value="1"/>
</dbReference>
<dbReference type="SUPFAM" id="SSF51366">
    <property type="entry name" value="Ribulose-phoshate binding barrel"/>
    <property type="match status" value="1"/>
</dbReference>
<protein>
    <recommendedName>
        <fullName>Imidazole glycerol phosphate synthase subunit HisF</fullName>
        <ecNumber>4.3.2.10</ecNumber>
    </recommendedName>
    <alternativeName>
        <fullName>IGP synthase cyclase subunit</fullName>
    </alternativeName>
    <alternativeName>
        <fullName>IGP synthase subunit HisF</fullName>
    </alternativeName>
    <alternativeName>
        <fullName>ImGP synthase subunit HisF</fullName>
        <shortName>IGPS subunit HisF</shortName>
    </alternativeName>
</protein>
<feature type="chain" id="PRO_0000142171" description="Imidazole glycerol phosphate synthase subunit HisF">
    <location>
        <begin position="1"/>
        <end position="212"/>
    </location>
</feature>
<feature type="active site" evidence="2">
    <location>
        <position position="11"/>
    </location>
</feature>
<feature type="active site" evidence="2">
    <location>
        <position position="130"/>
    </location>
</feature>
<evidence type="ECO:0000250" key="1"/>
<evidence type="ECO:0000255" key="2"/>
<evidence type="ECO:0000305" key="3"/>
<comment type="function">
    <text evidence="1">IGPS catalyzes the conversion of PRFAR and glutamine to IGP, AICAR and glutamate. The HisF subunit catalyzes the cyclization activity that produces IGP and AICAR from PRFAR using the ammonia provided by the HisH subunit (By similarity).</text>
</comment>
<comment type="catalytic activity">
    <reaction>
        <text>5-[(5-phospho-1-deoxy-D-ribulos-1-ylimino)methylamino]-1-(5-phospho-beta-D-ribosyl)imidazole-4-carboxamide + L-glutamine = D-erythro-1-(imidazol-4-yl)glycerol 3-phosphate + 5-amino-1-(5-phospho-beta-D-ribosyl)imidazole-4-carboxamide + L-glutamate + H(+)</text>
        <dbReference type="Rhea" id="RHEA:24793"/>
        <dbReference type="ChEBI" id="CHEBI:15378"/>
        <dbReference type="ChEBI" id="CHEBI:29985"/>
        <dbReference type="ChEBI" id="CHEBI:58278"/>
        <dbReference type="ChEBI" id="CHEBI:58359"/>
        <dbReference type="ChEBI" id="CHEBI:58475"/>
        <dbReference type="ChEBI" id="CHEBI:58525"/>
        <dbReference type="EC" id="4.3.2.10"/>
    </reaction>
</comment>
<comment type="pathway">
    <text>Amino-acid biosynthesis; L-histidine biosynthesis; L-histidine from 5-phospho-alpha-D-ribose 1-diphosphate: step 5/9.</text>
</comment>
<comment type="subunit">
    <text evidence="1">Heterodimer of HisH and HisF.</text>
</comment>
<comment type="subcellular location">
    <subcellularLocation>
        <location evidence="1">Cytoplasm</location>
    </subcellularLocation>
</comment>
<comment type="similarity">
    <text evidence="3">Belongs to the HisA/HisF family.</text>
</comment>
<name>HIS6_LEGPN</name>
<proteinExistence type="inferred from homology"/>
<keyword id="KW-0028">Amino-acid biosynthesis</keyword>
<keyword id="KW-0963">Cytoplasm</keyword>
<keyword id="KW-0368">Histidine biosynthesis</keyword>
<keyword id="KW-0456">Lyase</keyword>